<proteinExistence type="evidence at protein level"/>
<comment type="function">
    <text evidence="1 8">Beta-lactamase-like protein; part of the gene cluster that mediates the biosynthesis of strobilurin A, an antifungal polyketide that contains a key beta-methoxyacrylate toxophore that targets the complex III of the mitochondrial electron transport chain (PubMed:30258052). Strobilurin biosynthesis begins with construction of benzoyl CoA by step-wise elimination of ammonia from phenylalanine by the phenylalanine ammonia-lyase str11, oxygenation by str8 and retro-Claisen reaction to form benzoic acid, which is activated to its CoA thiolester benzoyl CoA by the dedicated CoA ligase str10 (PubMed:30258052). Benzoyl CoA forms the starter unit for the highly reducing polyketide synthase stpks1 that produces the polyketide prestrobilutin A (PubMed:30258052). The FAD-dependent oxygenase str9 then catalyzes the key oxidative rearrangement responsible for the creation of the beta-methoxyacrylate toxophore (PubMed:30258052). Str9 performs epoxidation of the 2,3 olefin of prestrobilutin A, followed by Meinwald rearrangement to furnish the aldehyde intermediate (Probable). Rapid enolization of the aldehyde intermediate would give the beta-methoxyacrylate skeleton and methylations catalyzed by str2 and str3 complete the synthesis and lead to the production of strobilurin A (Probable). The short-chain dehydrogenase stl2 and the dehydrogenase str4 play a role in the shunt pathway leading to the production of bolineol (PubMed:30258052). The cluster encodes no obvious halogenase gene that could be involved in production of strobilurin B, nor any obvious dimethylallyl-transferase that could be involved in the production of strobilurin G (Probable). It is possible that unknown proteins encoded in, or near, the cluster (such as str1 or stl1) may form new classes of halogenases or dimethylally-transferases, or that the responsible genes are located elsewhere on the genome (Probable). Similarly, proteins encoded by str5/str6 hydrolases appear to have no chemical role in the biosynthesis of strobilurin A (Probable). Finally, no obvious self-resistance gene is found within the cluster (Probable).</text>
</comment>
<comment type="pathway">
    <text evidence="8">Mycotoxin biosynthesis.</text>
</comment>
<comment type="biotechnology">
    <text evidence="2 3 4 5 6">The structure of strobilurin A was used for the development of the major class of beta-methoxyacrylate agricultural fungicides since its beta-methoxyacrylate toxophore targets the Qo site of complex III of the mitochondrial electron transport chain and prevents adenosine triphosphate synthesis (PubMed:563391, PubMed:6271595). Compounds such as azoxystrobin (Syngenta) and Kresoxim methyl (BASF) are among the most widely used fungicides worldwide (PubMed:12146165, PubMed:29711574). This class of antifungals are used as effective treatments against a broad range of destructive fungal plant pathogens and make significant contributions to food security (PubMed:12146165, PubMed:29711574). The strobilurin fungicides are estimated to have been worth 3.4 billion dollars in 2015 and they make up 25% of the fungicide market and 6.7% of the total crop protection market (PubMed:30258052).</text>
</comment>
<comment type="similarity">
    <text evidence="7">Belongs to the beta-lactamase family.</text>
</comment>
<comment type="caution">
    <text evidence="8">Str5 and str6 form two genes in S.tenacellus whereas they are fused in close related species.</text>
</comment>
<sequence>MIPNRWRDLARRDIFEPLGLNGSYFIPNAHNRAHVAVASKYSDEVDIDFLDVMACSGGQMSSLSDYIKLMQTFLDPTLPQSLLPAHIMREWMTPVFGFNDDETEVGLLWEIVKIQDSYCRPVRVYEKNGVLGASRSVFAIHREMAFGVALLNTGTATVTGNIALEIFRIMQPYLDKLQERKVKERFAGHWRLPLQTNATSGSMVDISVSDGSLWITRLVLNGTDVLSLTEAMPAFGGARSRRVALWSMRRDEFRMVLGAGAATSCMSSWTAMDSGFSRGYPMDLVYFKGGRLHIPSAGVVLVRA</sequence>
<gene>
    <name evidence="6" type="primary">str6</name>
</gene>
<reference key="1">
    <citation type="journal article" date="2018" name="Nat. Commun.">
        <title>Strobilurin biosynthesis in Basidiomycete fungi.</title>
        <authorList>
            <person name="Nofiani R."/>
            <person name="de Mattos-Shipley K."/>
            <person name="Lebe K.E."/>
            <person name="Han L.C."/>
            <person name="Iqbal Z."/>
            <person name="Bailey A.M."/>
            <person name="Willis C.L."/>
            <person name="Simpson T.J."/>
            <person name="Cox R.J."/>
        </authorList>
    </citation>
    <scope>NUCLEOTIDE SEQUENCE [GENOMIC DNA]</scope>
    <scope>FUNCTION</scope>
    <scope>BIOTECHNOLOGY</scope>
    <source>
        <strain>CBS 621.79</strain>
    </source>
</reference>
<reference key="2">
    <citation type="journal article" date="1977" name="J. Antibiot.">
        <title>The strobilurins--new antifungal antibiotics from the basidiomycete Strobilurus tenacellus.</title>
        <authorList>
            <person name="Anke T."/>
            <person name="Oberwinkler F."/>
            <person name="Steglich W."/>
            <person name="Schramm G."/>
        </authorList>
    </citation>
    <scope>BIOTECHNOLOGY</scope>
</reference>
<reference key="3">
    <citation type="journal article" date="1981" name="FEBS Lett.">
        <title>Oudemansin, strobilurin A, strobilurin B and myxothiazol: new inhibitors of the bc1 segment of the respiratory chain with an E-beta-methoxyacrylate system as common structural element.</title>
        <authorList>
            <person name="Becker W.F."/>
            <person name="von Jagow G."/>
            <person name="Anke T."/>
            <person name="Steglich W."/>
        </authorList>
    </citation>
    <scope>BIOTECHNOLOGY</scope>
</reference>
<reference key="4">
    <citation type="journal article" date="1999" name="Angew. Chem. Int. Ed.">
        <title>Strobilurins: evolution of a new class of active substances.</title>
        <authorList>
            <person name="Sauter H."/>
            <person name="Steglich W."/>
            <person name="Anke T."/>
        </authorList>
    </citation>
    <scope>REVIEW ON BIOTECHNOLOGY</scope>
</reference>
<reference key="5">
    <citation type="journal article" date="2002" name="Pest Manag. Sci.">
        <title>The strobilurin fungicides.</title>
        <authorList>
            <person name="Bartlett D.W."/>
            <person name="Clough J.M."/>
            <person name="Godwin J.R."/>
            <person name="Hall A.A."/>
            <person name="Hamer M."/>
            <person name="Parr-Dobrzanski B."/>
        </authorList>
    </citation>
    <scope>REVIEW ON BIOTECHNOLOGY</scope>
</reference>
<organism>
    <name type="scientific">Strobilurus tenacellus</name>
    <dbReference type="NCBI Taxonomy" id="41251"/>
    <lineage>
        <taxon>Eukaryota</taxon>
        <taxon>Fungi</taxon>
        <taxon>Dikarya</taxon>
        <taxon>Basidiomycota</taxon>
        <taxon>Agaricomycotina</taxon>
        <taxon>Agaricomycetes</taxon>
        <taxon>Agaricomycetidae</taxon>
        <taxon>Agaricales</taxon>
        <taxon>Marasmiineae</taxon>
        <taxon>Physalacriaceae</taxon>
        <taxon>Strobilurus</taxon>
    </lineage>
</organism>
<keyword id="KW-0378">Hydrolase</keyword>
<name>STR6_STRTC</name>
<dbReference type="EC" id="3.5.-.-" evidence="8"/>
<dbReference type="EMBL" id="KY070339">
    <property type="protein sequence ID" value="ATV82116.1"/>
    <property type="molecule type" value="Genomic_DNA"/>
</dbReference>
<dbReference type="SMR" id="A0A384XLH1"/>
<dbReference type="GO" id="GO:0016787">
    <property type="term" value="F:hydrolase activity"/>
    <property type="evidence" value="ECO:0007669"/>
    <property type="project" value="UniProtKB-KW"/>
</dbReference>
<dbReference type="Gene3D" id="3.40.710.10">
    <property type="entry name" value="DD-peptidase/beta-lactamase superfamily"/>
    <property type="match status" value="1"/>
</dbReference>
<dbReference type="InterPro" id="IPR001466">
    <property type="entry name" value="Beta-lactam-related"/>
</dbReference>
<dbReference type="InterPro" id="IPR012338">
    <property type="entry name" value="Beta-lactam/transpept-like"/>
</dbReference>
<dbReference type="InterPro" id="IPR051478">
    <property type="entry name" value="Beta-lactamase-like_AB/R"/>
</dbReference>
<dbReference type="PANTHER" id="PTHR22935:SF95">
    <property type="entry name" value="BETA-LACTAMASE-LIKE 1-RELATED"/>
    <property type="match status" value="1"/>
</dbReference>
<dbReference type="PANTHER" id="PTHR22935">
    <property type="entry name" value="PENICILLIN-BINDING PROTEIN"/>
    <property type="match status" value="1"/>
</dbReference>
<dbReference type="Pfam" id="PF00144">
    <property type="entry name" value="Beta-lactamase"/>
    <property type="match status" value="1"/>
</dbReference>
<dbReference type="SUPFAM" id="SSF56601">
    <property type="entry name" value="beta-lactamase/transpeptidase-like"/>
    <property type="match status" value="1"/>
</dbReference>
<accession>A0A384XLH1</accession>
<feature type="chain" id="PRO_0000449343" description="Beta-lactamase-like protein str6">
    <location>
        <begin position="1"/>
        <end position="304"/>
    </location>
</feature>
<evidence type="ECO:0000269" key="1">
    <source>
    </source>
</evidence>
<evidence type="ECO:0000269" key="2">
    <source>
    </source>
</evidence>
<evidence type="ECO:0000269" key="3">
    <source>
    </source>
</evidence>
<evidence type="ECO:0000303" key="4">
    <source>
    </source>
</evidence>
<evidence type="ECO:0000303" key="5">
    <source>
    </source>
</evidence>
<evidence type="ECO:0000303" key="6">
    <source>
    </source>
</evidence>
<evidence type="ECO:0000305" key="7"/>
<evidence type="ECO:0000305" key="8">
    <source>
    </source>
</evidence>
<protein>
    <recommendedName>
        <fullName evidence="6">Beta-lactamase-like protein str6</fullName>
        <ecNumber evidence="8">3.5.-.-</ecNumber>
    </recommendedName>
    <alternativeName>
        <fullName evidence="6">Strobilurin A biosynthesis cluster protein r6</fullName>
    </alternativeName>
</protein>